<feature type="chain" id="PRO_0000403961" description="Probable bifunctional methylthioribulose-1-phosphate dehydratase/enolase-phosphatase E1 2">
    <location>
        <begin position="1"/>
        <end position="531"/>
    </location>
</feature>
<feature type="region of interest" description="Methylthioribulose-1-phosphate dehydratase" evidence="1">
    <location>
        <begin position="1"/>
        <end position="248"/>
    </location>
</feature>
<feature type="region of interest" description="Enolase-phosphatase E1" evidence="1">
    <location>
        <begin position="292"/>
        <end position="531"/>
    </location>
</feature>
<feature type="active site" description="Proton donor/acceptor; for methylthioribulose-1-phosphate dehydratase activity" evidence="1">
    <location>
        <position position="163"/>
    </location>
</feature>
<feature type="binding site" evidence="1">
    <location>
        <position position="120"/>
    </location>
    <ligand>
        <name>substrate</name>
        <label>1</label>
        <note>for methylthioribulose-1-phosphate dehydratase activity</note>
    </ligand>
</feature>
<feature type="binding site" evidence="1">
    <location>
        <position position="138"/>
    </location>
    <ligand>
        <name>Zn(2+)</name>
        <dbReference type="ChEBI" id="CHEBI:29105"/>
    </ligand>
</feature>
<feature type="binding site" evidence="1">
    <location>
        <position position="140"/>
    </location>
    <ligand>
        <name>Zn(2+)</name>
        <dbReference type="ChEBI" id="CHEBI:29105"/>
    </ligand>
</feature>
<feature type="binding site" evidence="1">
    <location>
        <position position="213"/>
    </location>
    <ligand>
        <name>Zn(2+)</name>
        <dbReference type="ChEBI" id="CHEBI:29105"/>
    </ligand>
</feature>
<feature type="binding site" evidence="1">
    <location>
        <position position="295"/>
    </location>
    <ligand>
        <name>Mg(2+)</name>
        <dbReference type="ChEBI" id="CHEBI:18420"/>
    </ligand>
</feature>
<feature type="binding site" evidence="1">
    <location>
        <position position="297"/>
    </location>
    <ligand>
        <name>Mg(2+)</name>
        <dbReference type="ChEBI" id="CHEBI:18420"/>
    </ligand>
</feature>
<feature type="binding site" evidence="1">
    <location>
        <begin position="430"/>
        <end position="431"/>
    </location>
    <ligand>
        <name>substrate</name>
        <label>2</label>
        <note>for enolase-phosphatase activity</note>
    </ligand>
</feature>
<feature type="binding site" evidence="1">
    <location>
        <position position="464"/>
    </location>
    <ligand>
        <name>substrate</name>
        <label>2</label>
        <note>for enolase-phosphatase activity</note>
    </ligand>
</feature>
<feature type="binding site" evidence="1">
    <location>
        <position position="490"/>
    </location>
    <ligand>
        <name>Mg(2+)</name>
        <dbReference type="ChEBI" id="CHEBI:18420"/>
    </ligand>
</feature>
<reference key="1">
    <citation type="journal article" date="2007" name="Nature">
        <title>The grapevine genome sequence suggests ancestral hexaploidization in major angiosperm phyla.</title>
        <authorList>
            <person name="Jaillon O."/>
            <person name="Aury J.-M."/>
            <person name="Noel B."/>
            <person name="Policriti A."/>
            <person name="Clepet C."/>
            <person name="Casagrande A."/>
            <person name="Choisne N."/>
            <person name="Aubourg S."/>
            <person name="Vitulo N."/>
            <person name="Jubin C."/>
            <person name="Vezzi A."/>
            <person name="Legeai F."/>
            <person name="Hugueney P."/>
            <person name="Dasilva C."/>
            <person name="Horner D."/>
            <person name="Mica E."/>
            <person name="Jublot D."/>
            <person name="Poulain J."/>
            <person name="Bruyere C."/>
            <person name="Billault A."/>
            <person name="Segurens B."/>
            <person name="Gouyvenoux M."/>
            <person name="Ugarte E."/>
            <person name="Cattonaro F."/>
            <person name="Anthouard V."/>
            <person name="Vico V."/>
            <person name="Del Fabbro C."/>
            <person name="Alaux M."/>
            <person name="Di Gaspero G."/>
            <person name="Dumas V."/>
            <person name="Felice N."/>
            <person name="Paillard S."/>
            <person name="Juman I."/>
            <person name="Moroldo M."/>
            <person name="Scalabrin S."/>
            <person name="Canaguier A."/>
            <person name="Le Clainche I."/>
            <person name="Malacrida G."/>
            <person name="Durand E."/>
            <person name="Pesole G."/>
            <person name="Laucou V."/>
            <person name="Chatelet P."/>
            <person name="Merdinoglu D."/>
            <person name="Delledonne M."/>
            <person name="Pezzotti M."/>
            <person name="Lecharny A."/>
            <person name="Scarpelli C."/>
            <person name="Artiguenave F."/>
            <person name="Pe M.E."/>
            <person name="Valle G."/>
            <person name="Morgante M."/>
            <person name="Caboche M."/>
            <person name="Adam-Blondon A.-F."/>
            <person name="Weissenbach J."/>
            <person name="Quetier F."/>
            <person name="Wincker P."/>
        </authorList>
    </citation>
    <scope>NUCLEOTIDE SEQUENCE [LARGE SCALE GENOMIC DNA]</scope>
    <source>
        <strain>cv. Pinot noir / PN40024</strain>
    </source>
</reference>
<sequence>MGVPSEGAVGNVNGNEVGTTASFAGYMETRGVREARVLASELCRHMYTLGWFSGTGGSITIKVHDDSIPKPRQLVVISPSGVQKERMVPEDMYVLSSDGFILSTPPLKPYPHKPPKCTDCTPLFMKVYEMRDAGAVIHSHGMESCIVTMILPFSKEFRITHMEMIKGIKGHGYHDELVVPIIENTAHEAELVESLTEAITAYPKTTAVLVRNHGVYVWGDSWISAKTQAECYHYLFDAAIKLHQLGLDWSTPTHGPIRSINGIWGCNGTMSRGLKVGGLSLDDMIEPSQRCILLDIEGTTTPISFVTDVLFPYAHANVGKHLAATFDSEETQDDINLLRSQIQHDLEHGVVGAVPIPPDYVGKELVIASFVANVEAMIRADRNITALKQLQGHIWKTGFQSNELVGVVFDDVPEALERWHASGIKVYIYSSGSREAQQLIFSNSNYGDLRKYFCGFFDTTMGNKKETHSYFEILRTVGIDRPSDMLFVTDVFQEAVAARAAGLEVVISIRPGNGPLPENHGFRTIETFLEI</sequence>
<gene>
    <name type="ordered locus">VIT_12s0028g03470</name>
</gene>
<keyword id="KW-0028">Amino-acid biosynthesis</keyword>
<keyword id="KW-0378">Hydrolase</keyword>
<keyword id="KW-0456">Lyase</keyword>
<keyword id="KW-0460">Magnesium</keyword>
<keyword id="KW-0479">Metal-binding</keyword>
<keyword id="KW-0486">Methionine biosynthesis</keyword>
<keyword id="KW-0511">Multifunctional enzyme</keyword>
<keyword id="KW-1185">Reference proteome</keyword>
<keyword id="KW-0862">Zinc</keyword>
<proteinExistence type="evidence at transcript level"/>
<name>MTBC2_VITVI</name>
<evidence type="ECO:0000255" key="1">
    <source>
        <dbReference type="HAMAP-Rule" id="MF_03118"/>
    </source>
</evidence>
<evidence type="ECO:0000305" key="2"/>
<organism>
    <name type="scientific">Vitis vinifera</name>
    <name type="common">Grape</name>
    <dbReference type="NCBI Taxonomy" id="29760"/>
    <lineage>
        <taxon>Eukaryota</taxon>
        <taxon>Viridiplantae</taxon>
        <taxon>Streptophyta</taxon>
        <taxon>Embryophyta</taxon>
        <taxon>Tracheophyta</taxon>
        <taxon>Spermatophyta</taxon>
        <taxon>Magnoliopsida</taxon>
        <taxon>eudicotyledons</taxon>
        <taxon>Gunneridae</taxon>
        <taxon>Pentapetalae</taxon>
        <taxon>rosids</taxon>
        <taxon>Vitales</taxon>
        <taxon>Vitaceae</taxon>
        <taxon>Viteae</taxon>
        <taxon>Vitis</taxon>
    </lineage>
</organism>
<protein>
    <recommendedName>
        <fullName evidence="1">Probable bifunctional methylthioribulose-1-phosphate dehydratase/enolase-phosphatase E1 2</fullName>
    </recommendedName>
    <domain>
        <recommendedName>
            <fullName evidence="1">Methylthioribulose-1-phosphate dehydratase</fullName>
            <shortName evidence="1">MTRu-1-P dehydratase</shortName>
            <ecNumber evidence="1">4.2.1.109</ecNumber>
        </recommendedName>
    </domain>
    <domain>
        <recommendedName>
            <fullName evidence="1">Enolase-phosphatase E1</fullName>
            <ecNumber evidence="1">3.1.3.77</ecNumber>
        </recommendedName>
        <alternativeName>
            <fullName evidence="1">2,3-diketo-5-methylthio-1-phosphopentane phosphatase</fullName>
        </alternativeName>
    </domain>
</protein>
<dbReference type="EC" id="4.2.1.109" evidence="1"/>
<dbReference type="EC" id="3.1.3.77" evidence="1"/>
<dbReference type="EMBL" id="FN595235">
    <property type="protein sequence ID" value="CCB47296.1"/>
    <property type="status" value="ALT_SEQ"/>
    <property type="molecule type" value="Genomic_DNA"/>
</dbReference>
<dbReference type="EMBL" id="FN597034">
    <property type="status" value="NOT_ANNOTATED_CDS"/>
    <property type="molecule type" value="Genomic_DNA"/>
</dbReference>
<dbReference type="SMR" id="E0CTF3"/>
<dbReference type="STRING" id="29760.E0CTF3"/>
<dbReference type="PaxDb" id="29760-VIT_12s0028g03470.t01"/>
<dbReference type="eggNOG" id="KOG2630">
    <property type="taxonomic scope" value="Eukaryota"/>
</dbReference>
<dbReference type="eggNOG" id="KOG2631">
    <property type="taxonomic scope" value="Eukaryota"/>
</dbReference>
<dbReference type="HOGENOM" id="CLU_023273_3_1_1"/>
<dbReference type="InParanoid" id="E0CTF3"/>
<dbReference type="OrthoDB" id="191080at2759"/>
<dbReference type="UniPathway" id="UPA00904">
    <property type="reaction ID" value="UER00875"/>
</dbReference>
<dbReference type="UniPathway" id="UPA00904">
    <property type="reaction ID" value="UER00876"/>
</dbReference>
<dbReference type="UniPathway" id="UPA00904">
    <property type="reaction ID" value="UER00877"/>
</dbReference>
<dbReference type="Proteomes" id="UP000009183">
    <property type="component" value="Chromosome 12"/>
</dbReference>
<dbReference type="ExpressionAtlas" id="E0CTF3">
    <property type="expression patterns" value="baseline and differential"/>
</dbReference>
<dbReference type="GO" id="GO:0005737">
    <property type="term" value="C:cytoplasm"/>
    <property type="evidence" value="ECO:0000318"/>
    <property type="project" value="GO_Central"/>
</dbReference>
<dbReference type="GO" id="GO:0043874">
    <property type="term" value="F:acireductone synthase activity"/>
    <property type="evidence" value="ECO:0007669"/>
    <property type="project" value="UniProtKB-EC"/>
</dbReference>
<dbReference type="GO" id="GO:0000287">
    <property type="term" value="F:magnesium ion binding"/>
    <property type="evidence" value="ECO:0007669"/>
    <property type="project" value="UniProtKB-UniRule"/>
</dbReference>
<dbReference type="GO" id="GO:0046570">
    <property type="term" value="F:methylthioribulose 1-phosphate dehydratase activity"/>
    <property type="evidence" value="ECO:0000318"/>
    <property type="project" value="GO_Central"/>
</dbReference>
<dbReference type="GO" id="GO:0008270">
    <property type="term" value="F:zinc ion binding"/>
    <property type="evidence" value="ECO:0007669"/>
    <property type="project" value="UniProtKB-UniRule"/>
</dbReference>
<dbReference type="GO" id="GO:0019509">
    <property type="term" value="P:L-methionine salvage from methylthioadenosine"/>
    <property type="evidence" value="ECO:0000318"/>
    <property type="project" value="GO_Central"/>
</dbReference>
<dbReference type="CDD" id="cd01629">
    <property type="entry name" value="HAD_EP"/>
    <property type="match status" value="1"/>
</dbReference>
<dbReference type="FunFam" id="1.10.720.60:FF:000001">
    <property type="entry name" value="Probable bifunctional methylthioribulose-1-phosphate dehydratase/enolase-phosphatase E1"/>
    <property type="match status" value="1"/>
</dbReference>
<dbReference type="FunFam" id="3.40.225.10:FF:000010">
    <property type="entry name" value="Probable bifunctional methylthioribulose-1-phosphate dehydratase/enolase-phosphatase E1"/>
    <property type="match status" value="1"/>
</dbReference>
<dbReference type="FunFam" id="3.40.50.1000:FF:000088">
    <property type="entry name" value="Probable bifunctional methylthioribulose-1-phosphate dehydratase/enolase-phosphatase E1"/>
    <property type="match status" value="1"/>
</dbReference>
<dbReference type="Gene3D" id="1.10.720.60">
    <property type="match status" value="1"/>
</dbReference>
<dbReference type="Gene3D" id="3.40.225.10">
    <property type="entry name" value="Class II aldolase/adducin N-terminal domain"/>
    <property type="match status" value="1"/>
</dbReference>
<dbReference type="Gene3D" id="3.40.50.1000">
    <property type="entry name" value="HAD superfamily/HAD-like"/>
    <property type="match status" value="1"/>
</dbReference>
<dbReference type="HAMAP" id="MF_03116">
    <property type="entry name" value="Salvage_MtnB_euk"/>
    <property type="match status" value="1"/>
</dbReference>
<dbReference type="HAMAP" id="MF_03118">
    <property type="entry name" value="Salvage_MtnBC"/>
    <property type="match status" value="1"/>
</dbReference>
<dbReference type="InterPro" id="IPR001303">
    <property type="entry name" value="Aldolase_II/adducin_N"/>
</dbReference>
<dbReference type="InterPro" id="IPR036409">
    <property type="entry name" value="Aldolase_II/adducin_N_sf"/>
</dbReference>
<dbReference type="InterPro" id="IPR023943">
    <property type="entry name" value="Enolase-ppase_E1"/>
</dbReference>
<dbReference type="InterPro" id="IPR036412">
    <property type="entry name" value="HAD-like_sf"/>
</dbReference>
<dbReference type="InterPro" id="IPR006439">
    <property type="entry name" value="HAD-SF_hydro_IA"/>
</dbReference>
<dbReference type="InterPro" id="IPR023214">
    <property type="entry name" value="HAD_sf"/>
</dbReference>
<dbReference type="InterPro" id="IPR017714">
    <property type="entry name" value="MethylthioRu-1-P_deHdtase_MtnB"/>
</dbReference>
<dbReference type="InterPro" id="IPR027505">
    <property type="entry name" value="MtnB_viridiplantae"/>
</dbReference>
<dbReference type="InterPro" id="IPR027514">
    <property type="entry name" value="Salvage_MtnB_euk"/>
</dbReference>
<dbReference type="NCBIfam" id="TIGR01691">
    <property type="entry name" value="enolase-ppase"/>
    <property type="match status" value="1"/>
</dbReference>
<dbReference type="NCBIfam" id="TIGR01549">
    <property type="entry name" value="HAD-SF-IA-v1"/>
    <property type="match status" value="1"/>
</dbReference>
<dbReference type="NCBIfam" id="TIGR03328">
    <property type="entry name" value="salvage_mtnB"/>
    <property type="match status" value="1"/>
</dbReference>
<dbReference type="PANTHER" id="PTHR20371">
    <property type="entry name" value="ENOLASE-PHOSPHATASE E1"/>
    <property type="match status" value="1"/>
</dbReference>
<dbReference type="PANTHER" id="PTHR20371:SF1">
    <property type="entry name" value="ENOLASE-PHOSPHATASE E1"/>
    <property type="match status" value="1"/>
</dbReference>
<dbReference type="Pfam" id="PF00596">
    <property type="entry name" value="Aldolase_II"/>
    <property type="match status" value="1"/>
</dbReference>
<dbReference type="Pfam" id="PF00702">
    <property type="entry name" value="Hydrolase"/>
    <property type="match status" value="1"/>
</dbReference>
<dbReference type="SFLD" id="SFLDG01133">
    <property type="entry name" value="C1.5.4:_Enolase-phosphatase_Li"/>
    <property type="match status" value="1"/>
</dbReference>
<dbReference type="SFLD" id="SFLDF00044">
    <property type="entry name" value="enolase-phosphatase"/>
    <property type="match status" value="1"/>
</dbReference>
<dbReference type="SMART" id="SM01007">
    <property type="entry name" value="Aldolase_II"/>
    <property type="match status" value="1"/>
</dbReference>
<dbReference type="SUPFAM" id="SSF53639">
    <property type="entry name" value="AraD/HMP-PK domain-like"/>
    <property type="match status" value="1"/>
</dbReference>
<dbReference type="SUPFAM" id="SSF56784">
    <property type="entry name" value="HAD-like"/>
    <property type="match status" value="1"/>
</dbReference>
<accession>E0CTF3</accession>
<accession>F6H5E7</accession>
<comment type="catalytic activity">
    <reaction evidence="1">
        <text>5-(methylsulfanyl)-D-ribulose 1-phosphate = 5-methylsulfanyl-2,3-dioxopentyl phosphate + H2O</text>
        <dbReference type="Rhea" id="RHEA:15549"/>
        <dbReference type="ChEBI" id="CHEBI:15377"/>
        <dbReference type="ChEBI" id="CHEBI:58548"/>
        <dbReference type="ChEBI" id="CHEBI:58828"/>
        <dbReference type="EC" id="4.2.1.109"/>
    </reaction>
</comment>
<comment type="catalytic activity">
    <reaction evidence="1">
        <text>5-methylsulfanyl-2,3-dioxopentyl phosphate + H2O = 1,2-dihydroxy-5-(methylsulfanyl)pent-1-en-3-one + phosphate</text>
        <dbReference type="Rhea" id="RHEA:21700"/>
        <dbReference type="ChEBI" id="CHEBI:15377"/>
        <dbReference type="ChEBI" id="CHEBI:43474"/>
        <dbReference type="ChEBI" id="CHEBI:49252"/>
        <dbReference type="ChEBI" id="CHEBI:58828"/>
        <dbReference type="EC" id="3.1.3.77"/>
    </reaction>
</comment>
<comment type="cofactor">
    <cofactor evidence="1">
        <name>Zn(2+)</name>
        <dbReference type="ChEBI" id="CHEBI:29105"/>
    </cofactor>
    <text evidence="1">Binds 1 zinc ion per subunit.</text>
</comment>
<comment type="cofactor">
    <cofactor evidence="1">
        <name>Mg(2+)</name>
        <dbReference type="ChEBI" id="CHEBI:18420"/>
    </cofactor>
    <text evidence="1">Binds 1 Mg(2+) ion per subunit.</text>
</comment>
<comment type="pathway">
    <text evidence="1">Amino-acid biosynthesis; L-methionine biosynthesis via salvage pathway; L-methionine from S-methyl-5-thio-alpha-D-ribose 1-phosphate: step 2/6.</text>
</comment>
<comment type="pathway">
    <text evidence="1">Amino-acid biosynthesis; L-methionine biosynthesis via salvage pathway; L-methionine from S-methyl-5-thio-alpha-D-ribose 1-phosphate: step 3/6.</text>
</comment>
<comment type="pathway">
    <text evidence="1">Amino-acid biosynthesis; L-methionine biosynthesis via salvage pathway; L-methionine from S-methyl-5-thio-alpha-D-ribose 1-phosphate: step 4/6.</text>
</comment>
<comment type="similarity">
    <text evidence="1">In the N-terminal section; belongs to the aldolase class II family. MtnB subfamily.</text>
</comment>
<comment type="similarity">
    <text evidence="1">In the C-terminal section; belongs to the HAD-like hydrolase superfamily. MasA/MtnC family.</text>
</comment>
<comment type="sequence caution" evidence="2">
    <conflict type="erroneous gene model prediction">
        <sequence resource="EMBL-CDS" id="CCB47296"/>
    </conflict>
</comment>